<accession>P86151</accession>
<organism>
    <name type="scientific">Pelophylax ridibundus</name>
    <name type="common">Marsh frog</name>
    <name type="synonym">Rana ridibunda</name>
    <dbReference type="NCBI Taxonomy" id="8406"/>
    <lineage>
        <taxon>Eukaryota</taxon>
        <taxon>Metazoa</taxon>
        <taxon>Chordata</taxon>
        <taxon>Craniata</taxon>
        <taxon>Vertebrata</taxon>
        <taxon>Euteleostomi</taxon>
        <taxon>Amphibia</taxon>
        <taxon>Batrachia</taxon>
        <taxon>Anura</taxon>
        <taxon>Neobatrachia</taxon>
        <taxon>Ranoidea</taxon>
        <taxon>Ranidae</taxon>
        <taxon>Pelophylax</taxon>
    </lineage>
</organism>
<evidence type="ECO:0000250" key="1">
    <source>
        <dbReference type="UniProtKB" id="P40839"/>
    </source>
</evidence>
<evidence type="ECO:0000255" key="2"/>
<evidence type="ECO:0000269" key="3">
    <source>
    </source>
</evidence>
<evidence type="ECO:0000269" key="4">
    <source>
    </source>
</evidence>
<evidence type="ECO:0000303" key="5">
    <source>
    </source>
</evidence>
<evidence type="ECO:0000305" key="6"/>
<keyword id="KW-0878">Amphibian defense peptide</keyword>
<keyword id="KW-0044">Antibiotic</keyword>
<keyword id="KW-0929">Antimicrobial</keyword>
<keyword id="KW-0204">Cytolysis</keyword>
<keyword id="KW-0903">Direct protein sequencing</keyword>
<keyword id="KW-1015">Disulfide bond</keyword>
<keyword id="KW-0354">Hemolysis</keyword>
<keyword id="KW-0964">Secreted</keyword>
<protein>
    <recommendedName>
        <fullName evidence="5">Brevinin-2Ec</fullName>
    </recommendedName>
</protein>
<reference evidence="6" key="1">
    <citation type="journal article" date="2008" name="J. Am. Soc. Mass Spectrom.">
        <title>Oxidation versus carboxamidomethylation of S-S bond in ranid frog peptides: pro and contra for de novo MALDI-MS sequencing.</title>
        <authorList>
            <person name="Samgina T.Y."/>
            <person name="Artemenko K.A."/>
            <person name="Gorshkov V.A."/>
            <person name="Poljakov N.B."/>
            <person name="Lebedev A.T."/>
        </authorList>
    </citation>
    <scope>PROTEIN SEQUENCE</scope>
    <scope>SUBCELLULAR LOCATION</scope>
    <scope>TISSUE SPECIFICITY</scope>
    <scope>MASS SPECTROMETRY</scope>
    <scope>DISULFIDE BOND</scope>
    <source>
        <tissue evidence="3">Skin secretion</tissue>
    </source>
</reference>
<reference evidence="6" key="2">
    <citation type="journal article" date="2008" name="Rapid Commun. Mass Spectrom.">
        <title>De novo sequencing of peptides secreted by the skin glands of the caucasian green frog Rana ridibunda.</title>
        <authorList>
            <person name="Samgina T.Y."/>
            <person name="Artemenko K.A."/>
            <person name="Gorshkov V.A."/>
            <person name="Ogourtsov S.V."/>
            <person name="Zubarev R.A."/>
            <person name="Lebedev A.T."/>
        </authorList>
    </citation>
    <scope>PROTEIN SEQUENCE</scope>
    <scope>SUBCELLULAR LOCATION</scope>
    <scope>TISSUE SPECIFICITY</scope>
    <scope>MASS SPECTROMETRY</scope>
    <scope>DISULFIDE BOND</scope>
    <source>
        <tissue evidence="4">Skin secretion</tissue>
    </source>
</reference>
<comment type="function">
    <text evidence="1">Shows antibacterial activity against representative Gram-negative and Gram-positive bacterial species, and hemolytic activity.</text>
</comment>
<comment type="subcellular location">
    <subcellularLocation>
        <location evidence="3 4">Secreted</location>
    </subcellularLocation>
</comment>
<comment type="tissue specificity">
    <text evidence="3 4">Expressed by the skin glands.</text>
</comment>
<comment type="mass spectrometry"/>
<comment type="mass spectrometry"/>
<comment type="similarity">
    <text evidence="2">Belongs to the frog skin active peptide (FSAP) family. Brevinin subfamily.</text>
</comment>
<feature type="peptide" id="PRO_0000361059" description="Brevinin-2Ec" evidence="3 4">
    <location>
        <begin position="1"/>
        <end position="34"/>
    </location>
</feature>
<feature type="disulfide bond" evidence="3 4">
    <location>
        <begin position="28"/>
        <end position="34"/>
    </location>
</feature>
<sequence>GILLDKLKNFAKTAGKGVLQSLLNTASCKLSGQC</sequence>
<dbReference type="SMR" id="P86151"/>
<dbReference type="GO" id="GO:0005576">
    <property type="term" value="C:extracellular region"/>
    <property type="evidence" value="ECO:0000314"/>
    <property type="project" value="UniProtKB"/>
</dbReference>
<dbReference type="GO" id="GO:0042742">
    <property type="term" value="P:defense response to bacterium"/>
    <property type="evidence" value="ECO:0007669"/>
    <property type="project" value="UniProtKB-KW"/>
</dbReference>
<dbReference type="GO" id="GO:0031640">
    <property type="term" value="P:killing of cells of another organism"/>
    <property type="evidence" value="ECO:0007669"/>
    <property type="project" value="UniProtKB-KW"/>
</dbReference>
<dbReference type="InterPro" id="IPR012521">
    <property type="entry name" value="Antimicrobial_frog_2"/>
</dbReference>
<dbReference type="Pfam" id="PF08023">
    <property type="entry name" value="Antimicrobial_2"/>
    <property type="match status" value="1"/>
</dbReference>
<name>BR2EC_PELRI</name>
<proteinExistence type="evidence at protein level"/>